<organism>
    <name type="scientific">Saccharomyces cerevisiae (strain ATCC 204508 / S288c)</name>
    <name type="common">Baker's yeast</name>
    <dbReference type="NCBI Taxonomy" id="559292"/>
    <lineage>
        <taxon>Eukaryota</taxon>
        <taxon>Fungi</taxon>
        <taxon>Dikarya</taxon>
        <taxon>Ascomycota</taxon>
        <taxon>Saccharomycotina</taxon>
        <taxon>Saccharomycetes</taxon>
        <taxon>Saccharomycetales</taxon>
        <taxon>Saccharomycetaceae</taxon>
        <taxon>Saccharomyces</taxon>
    </lineage>
</organism>
<proteinExistence type="evidence at protein level"/>
<name>YSF3_YEAST</name>
<protein>
    <recommendedName>
        <fullName>RDS3 complex subunit 10</fullName>
    </recommendedName>
    <alternativeName>
        <fullName>Splicing factor 3b subunit</fullName>
    </alternativeName>
</protein>
<sequence length="85" mass="10027">MAEKQRQLKLQKIYKQKYIGLGDESTTREQWQRNVRNDTLNTLQGHSASLEYVSLSRGDLSIRDTRIHLLKSMSPGYKAYLREER</sequence>
<dbReference type="EMBL" id="Z71414">
    <property type="status" value="NOT_ANNOTATED_CDS"/>
    <property type="molecule type" value="Genomic_DNA"/>
</dbReference>
<dbReference type="EMBL" id="Z71416">
    <property type="status" value="NOT_ANNOTATED_CDS"/>
    <property type="molecule type" value="Genomic_DNA"/>
</dbReference>
<dbReference type="EMBL" id="BK006947">
    <property type="protein sequence ID" value="DAA10409.1"/>
    <property type="molecule type" value="Genomic_DNA"/>
</dbReference>
<dbReference type="RefSeq" id="NP_878153.1">
    <property type="nucleotide sequence ID" value="NM_001184519.1"/>
</dbReference>
<dbReference type="PDB" id="5GM6">
    <property type="method" value="EM"/>
    <property type="resolution" value="3.50 A"/>
    <property type="chains" value="K=1-85"/>
</dbReference>
<dbReference type="PDB" id="5LQW">
    <property type="method" value="EM"/>
    <property type="resolution" value="5.80 A"/>
    <property type="chains" value="Z=1-85"/>
</dbReference>
<dbReference type="PDB" id="5NRL">
    <property type="method" value="EM"/>
    <property type="resolution" value="7.20 A"/>
    <property type="chains" value="Z=1-85"/>
</dbReference>
<dbReference type="PDB" id="5ZWM">
    <property type="method" value="EM"/>
    <property type="resolution" value="3.40 A"/>
    <property type="chains" value="6=1-85"/>
</dbReference>
<dbReference type="PDB" id="5ZWO">
    <property type="method" value="EM"/>
    <property type="resolution" value="3.90 A"/>
    <property type="chains" value="6=1-85"/>
</dbReference>
<dbReference type="PDB" id="6G90">
    <property type="method" value="EM"/>
    <property type="resolution" value="4.00 A"/>
    <property type="chains" value="Z=1-85"/>
</dbReference>
<dbReference type="PDB" id="7DCO">
    <property type="method" value="EM"/>
    <property type="resolution" value="2.50 A"/>
    <property type="chains" value="6=1-84"/>
</dbReference>
<dbReference type="PDB" id="7OQB">
    <property type="method" value="EM"/>
    <property type="resolution" value="9.00 A"/>
    <property type="chains" value="Z=1-84"/>
</dbReference>
<dbReference type="PDB" id="7OQE">
    <property type="method" value="EM"/>
    <property type="resolution" value="5.90 A"/>
    <property type="chains" value="Z=1-85"/>
</dbReference>
<dbReference type="PDBsum" id="5GM6"/>
<dbReference type="PDBsum" id="5LQW"/>
<dbReference type="PDBsum" id="5NRL"/>
<dbReference type="PDBsum" id="5ZWM"/>
<dbReference type="PDBsum" id="5ZWO"/>
<dbReference type="PDBsum" id="6G90"/>
<dbReference type="PDBsum" id="7DCO"/>
<dbReference type="PDBsum" id="7OQB"/>
<dbReference type="PDBsum" id="7OQE"/>
<dbReference type="EMDB" id="EMD-13028"/>
<dbReference type="EMDB" id="EMD-13033"/>
<dbReference type="EMDB" id="EMD-30637"/>
<dbReference type="EMDB" id="EMD-3683"/>
<dbReference type="EMDB" id="EMD-4364"/>
<dbReference type="EMDB" id="EMD-6972"/>
<dbReference type="EMDB" id="EMD-6974"/>
<dbReference type="EMDB" id="EMD-9524"/>
<dbReference type="SMR" id="P0C074"/>
<dbReference type="BioGRID" id="37053">
    <property type="interactions" value="43"/>
</dbReference>
<dbReference type="ComplexPortal" id="CPX-1647">
    <property type="entry name" value="SF3B complex"/>
</dbReference>
<dbReference type="ComplexPortal" id="CPX-26">
    <property type="entry name" value="U2 small nuclear ribonucleoprotein complex"/>
</dbReference>
<dbReference type="FunCoup" id="P0C074">
    <property type="interactions" value="95"/>
</dbReference>
<dbReference type="IntAct" id="P0C074">
    <property type="interactions" value="9"/>
</dbReference>
<dbReference type="MINT" id="P0C074"/>
<dbReference type="STRING" id="4932.YNL138W-A"/>
<dbReference type="PaxDb" id="4932-YNL138W-A"/>
<dbReference type="PeptideAtlas" id="P0C074"/>
<dbReference type="TopDownProteomics" id="P0C074"/>
<dbReference type="EnsemblFungi" id="YNL138W-A_mRNA">
    <property type="protein sequence ID" value="YNL138W-A"/>
    <property type="gene ID" value="YNL138W-A"/>
</dbReference>
<dbReference type="GeneID" id="1466511"/>
<dbReference type="KEGG" id="sce:YNL138W-A"/>
<dbReference type="AGR" id="SGD:S000028509"/>
<dbReference type="SGD" id="S000028509">
    <property type="gene designation" value="YSF3"/>
</dbReference>
<dbReference type="VEuPathDB" id="FungiDB:YNL138W-A"/>
<dbReference type="eggNOG" id="KOG3485">
    <property type="taxonomic scope" value="Eukaryota"/>
</dbReference>
<dbReference type="HOGENOM" id="CLU_138804_4_1_1"/>
<dbReference type="InParanoid" id="P0C074"/>
<dbReference type="OMA" id="NTTIEEW"/>
<dbReference type="OrthoDB" id="274726at2759"/>
<dbReference type="BioCyc" id="YEAST:G3O-33408-MONOMER"/>
<dbReference type="BioGRID-ORCS" id="1466511">
    <property type="hits" value="8 hits in 10 CRISPR screens"/>
</dbReference>
<dbReference type="PRO" id="PR:P0C074"/>
<dbReference type="Proteomes" id="UP000002311">
    <property type="component" value="Chromosome XIV"/>
</dbReference>
<dbReference type="RNAct" id="P0C074">
    <property type="molecule type" value="protein"/>
</dbReference>
<dbReference type="GO" id="GO:0005634">
    <property type="term" value="C:nucleus"/>
    <property type="evidence" value="ECO:0000303"/>
    <property type="project" value="ComplexPortal"/>
</dbReference>
<dbReference type="GO" id="GO:0071011">
    <property type="term" value="C:precatalytic spliceosome"/>
    <property type="evidence" value="ECO:0000318"/>
    <property type="project" value="GO_Central"/>
</dbReference>
<dbReference type="GO" id="GO:0005681">
    <property type="term" value="C:spliceosomal complex"/>
    <property type="evidence" value="ECO:0000303"/>
    <property type="project" value="ComplexPortal"/>
</dbReference>
<dbReference type="GO" id="GO:0005686">
    <property type="term" value="C:U2 snRNP"/>
    <property type="evidence" value="ECO:0000314"/>
    <property type="project" value="SGD"/>
</dbReference>
<dbReference type="GO" id="GO:0005684">
    <property type="term" value="C:U2-type spliceosomal complex"/>
    <property type="evidence" value="ECO:0000353"/>
    <property type="project" value="ComplexPortal"/>
</dbReference>
<dbReference type="GO" id="GO:0000398">
    <property type="term" value="P:mRNA splicing, via spliceosome"/>
    <property type="evidence" value="ECO:0000318"/>
    <property type="project" value="GO_Central"/>
</dbReference>
<dbReference type="GO" id="GO:0000245">
    <property type="term" value="P:spliceosomal complex assembly"/>
    <property type="evidence" value="ECO:0000315"/>
    <property type="project" value="SGD"/>
</dbReference>
<dbReference type="GO" id="GO:1903241">
    <property type="term" value="P:U2-type prespliceosome assembly"/>
    <property type="evidence" value="ECO:0000303"/>
    <property type="project" value="ComplexPortal"/>
</dbReference>
<dbReference type="InterPro" id="IPR009846">
    <property type="entry name" value="SF3b5/RDS3-10"/>
</dbReference>
<dbReference type="Pfam" id="PF07189">
    <property type="entry name" value="SF3b10"/>
    <property type="match status" value="1"/>
</dbReference>
<feature type="chain" id="PRO_0000097203" description="RDS3 complex subunit 10">
    <location>
        <begin position="1"/>
        <end position="85"/>
    </location>
</feature>
<evidence type="ECO:0000269" key="1">
    <source>
    </source>
</evidence>
<evidence type="ECO:0000269" key="2">
    <source>
    </source>
</evidence>
<evidence type="ECO:0000305" key="3"/>
<comment type="function">
    <text evidence="2">Involved in pre-mRNA splicing. Required for the SF3b integrity and prespliceosome assembly.</text>
</comment>
<comment type="subunit">
    <text evidence="1 2">Belongs to the SF3b complex composed of CUS1, HSH49, HSH155, RCP1, RDS3 and RSE1.</text>
</comment>
<comment type="interaction">
    <interactant intactId="EBI-970846">
        <id>P0C074</id>
    </interactant>
    <interactant intactId="EBI-664">
        <id>P49955</id>
        <label>HSH155</label>
    </interactant>
    <organismsDiffer>false</organismsDiffer>
    <experiments>3</experiments>
</comment>
<comment type="subcellular location">
    <subcellularLocation>
        <location evidence="3">Nucleus</location>
    </subcellularLocation>
</comment>
<keyword id="KW-0002">3D-structure</keyword>
<keyword id="KW-0507">mRNA processing</keyword>
<keyword id="KW-0508">mRNA splicing</keyword>
<keyword id="KW-0539">Nucleus</keyword>
<keyword id="KW-1185">Reference proteome</keyword>
<gene>
    <name type="primary">YSF3</name>
    <name type="synonym">RCP10</name>
    <name type="ordered locus">YNL138W-A</name>
</gene>
<accession>P0C074</accession>
<accession>D6W143</accession>
<reference key="1">
    <citation type="journal article" date="1997" name="Nature">
        <title>The nucleotide sequence of Saccharomyces cerevisiae chromosome XIV and its evolutionary implications.</title>
        <authorList>
            <person name="Philippsen P."/>
            <person name="Kleine K."/>
            <person name="Poehlmann R."/>
            <person name="Duesterhoeft A."/>
            <person name="Hamberg K."/>
            <person name="Hegemann J.H."/>
            <person name="Obermaier B."/>
            <person name="Urrestarazu L.A."/>
            <person name="Aert R."/>
            <person name="Albermann K."/>
            <person name="Altmann R."/>
            <person name="Andre B."/>
            <person name="Baladron V."/>
            <person name="Ballesta J.P.G."/>
            <person name="Becam A.-M."/>
            <person name="Beinhauer J.D."/>
            <person name="Boskovic J."/>
            <person name="Buitrago M.J."/>
            <person name="Bussereau F."/>
            <person name="Coster F."/>
            <person name="Crouzet M."/>
            <person name="D'Angelo M."/>
            <person name="Dal Pero F."/>
            <person name="De Antoni A."/>
            <person name="del Rey F."/>
            <person name="Doignon F."/>
            <person name="Domdey H."/>
            <person name="Dubois E."/>
            <person name="Fiedler T.A."/>
            <person name="Fleig U."/>
            <person name="Floeth M."/>
            <person name="Fritz C."/>
            <person name="Gaillardin C."/>
            <person name="Garcia-Cantalejo J.M."/>
            <person name="Glansdorff N."/>
            <person name="Goffeau A."/>
            <person name="Gueldener U."/>
            <person name="Herbert C.J."/>
            <person name="Heumann K."/>
            <person name="Heuss-Neitzel D."/>
            <person name="Hilbert H."/>
            <person name="Hinni K."/>
            <person name="Iraqui Houssaini I."/>
            <person name="Jacquet M."/>
            <person name="Jimenez A."/>
            <person name="Jonniaux J.-L."/>
            <person name="Karpfinger-Hartl L."/>
            <person name="Lanfranchi G."/>
            <person name="Lepingle A."/>
            <person name="Levesque H."/>
            <person name="Lyck R."/>
            <person name="Maftahi M."/>
            <person name="Mallet L."/>
            <person name="Maurer C.T.C."/>
            <person name="Messenguy F."/>
            <person name="Mewes H.-W."/>
            <person name="Moestl D."/>
            <person name="Nasr F."/>
            <person name="Nicaud J.-M."/>
            <person name="Niedenthal R.K."/>
            <person name="Pandolfo D."/>
            <person name="Pierard A."/>
            <person name="Piravandi E."/>
            <person name="Planta R.J."/>
            <person name="Pohl T.M."/>
            <person name="Purnelle B."/>
            <person name="Rebischung C."/>
            <person name="Remacha M.A."/>
            <person name="Revuelta J.L."/>
            <person name="Rinke M."/>
            <person name="Saiz J.E."/>
            <person name="Sartorello F."/>
            <person name="Scherens B."/>
            <person name="Sen-Gupta M."/>
            <person name="Soler-Mira A."/>
            <person name="Urbanus J.H.M."/>
            <person name="Valle G."/>
            <person name="Van Dyck L."/>
            <person name="Verhasselt P."/>
            <person name="Vierendeels F."/>
            <person name="Vissers S."/>
            <person name="Voet M."/>
            <person name="Volckaert G."/>
            <person name="Wach A."/>
            <person name="Wambutt R."/>
            <person name="Wedler H."/>
            <person name="Zollner A."/>
            <person name="Hani J."/>
        </authorList>
    </citation>
    <scope>NUCLEOTIDE SEQUENCE [LARGE SCALE GENOMIC DNA]</scope>
    <source>
        <strain>ATCC 204508 / S288c</strain>
    </source>
</reference>
<reference key="2">
    <citation type="journal article" date="2014" name="G3 (Bethesda)">
        <title>The reference genome sequence of Saccharomyces cerevisiae: Then and now.</title>
        <authorList>
            <person name="Engel S.R."/>
            <person name="Dietrich F.S."/>
            <person name="Fisk D.G."/>
            <person name="Binkley G."/>
            <person name="Balakrishnan R."/>
            <person name="Costanzo M.C."/>
            <person name="Dwight S.S."/>
            <person name="Hitz B.C."/>
            <person name="Karra K."/>
            <person name="Nash R.S."/>
            <person name="Weng S."/>
            <person name="Wong E.D."/>
            <person name="Lloyd P."/>
            <person name="Skrzypek M.S."/>
            <person name="Miyasato S.R."/>
            <person name="Simison M."/>
            <person name="Cherry J.M."/>
        </authorList>
    </citation>
    <scope>GENOME REANNOTATION</scope>
    <source>
        <strain>ATCC 204508 / S288c</strain>
    </source>
</reference>
<reference key="3">
    <citation type="journal article" date="2003" name="Genome Biol.">
        <title>Reinvestigation of the Saccharomyces cerevisiae genome annotation by comparison to the genome of a related fungus: Ashbya gossypii.</title>
        <authorList>
            <person name="Brachat S."/>
            <person name="Dietrich F.S."/>
            <person name="Voegeli S."/>
            <person name="Zhang Z."/>
            <person name="Stuart L."/>
            <person name="Lerch A."/>
            <person name="Gates K."/>
            <person name="Gaffney T.D."/>
            <person name="Philippsen P."/>
        </authorList>
    </citation>
    <scope>GENOME REANNOTATION</scope>
    <source>
        <strain>ATCC 204511 / S288c / AB972</strain>
    </source>
</reference>
<reference key="4">
    <citation type="journal article" date="2004" name="EMBO J.">
        <title>Proteomic analysis identifies a new complex required for nuclear pre-mRNA retention and splicing.</title>
        <authorList>
            <person name="Dziembowski A."/>
            <person name="Ventura A.-P."/>
            <person name="Rutz B."/>
            <person name="Caspary F."/>
            <person name="Faux C."/>
            <person name="Halgand F."/>
            <person name="Laprevote O."/>
            <person name="Seraphin B."/>
        </authorList>
    </citation>
    <scope>IDENTIFICATION IN THE SF3B COMPLEX</scope>
    <scope>IDENTIFICATION BY MASS SPECTROMETRY</scope>
</reference>
<reference key="5">
    <citation type="journal article" date="2005" name="Mol. Cell. Biol.">
        <title>Interactions of the yeast SF3b splicing factor.</title>
        <authorList>
            <person name="Wang Q."/>
            <person name="He J."/>
            <person name="Lynn B."/>
            <person name="Rymond B.C."/>
        </authorList>
    </citation>
    <scope>IDENTIFICATION IN THE SF3B COMPLEX</scope>
    <scope>FUNCTION</scope>
    <scope>IDENTIFICATION BY MASS SPECTROMETRY</scope>
</reference>